<protein>
    <recommendedName>
        <fullName evidence="1">Elongation factor P</fullName>
        <shortName evidence="1">EF-P</shortName>
    </recommendedName>
</protein>
<name>EFP_BRUC2</name>
<evidence type="ECO:0000255" key="1">
    <source>
        <dbReference type="HAMAP-Rule" id="MF_00141"/>
    </source>
</evidence>
<keyword id="KW-0963">Cytoplasm</keyword>
<keyword id="KW-0251">Elongation factor</keyword>
<keyword id="KW-0648">Protein biosynthesis</keyword>
<keyword id="KW-1185">Reference proteome</keyword>
<gene>
    <name evidence="1" type="primary">efp</name>
    <name type="ordered locus">BCAN_A1748</name>
</gene>
<organism>
    <name type="scientific">Brucella canis (strain ATCC 23365 / NCTC 10854 / RM-666)</name>
    <dbReference type="NCBI Taxonomy" id="483179"/>
    <lineage>
        <taxon>Bacteria</taxon>
        <taxon>Pseudomonadati</taxon>
        <taxon>Pseudomonadota</taxon>
        <taxon>Alphaproteobacteria</taxon>
        <taxon>Hyphomicrobiales</taxon>
        <taxon>Brucellaceae</taxon>
        <taxon>Brucella/Ochrobactrum group</taxon>
        <taxon>Brucella</taxon>
    </lineage>
</organism>
<feature type="chain" id="PRO_1000076504" description="Elongation factor P">
    <location>
        <begin position="1"/>
        <end position="186"/>
    </location>
</feature>
<sequence>MKINGNEIRPGNVIEHEGGLWVAVKTNAVKPGKGGAYNQVELKNLINGTKLNERFRAAETVERVRLEQKDFSFLYEQGEALIFMDTETYEQLELQKDFVGDRAAFLQDGMMVTVELYEEKPIGIRLPDQVTLAITEADPVVKGQTAASSYKPAVLENGIRILVPPFIASGERVIVDTNELTYISRA</sequence>
<reference key="1">
    <citation type="submission" date="2007-10" db="EMBL/GenBank/DDBJ databases">
        <title>Brucella canis ATCC 23365 whole genome shotgun sequencing project.</title>
        <authorList>
            <person name="Setubal J.C."/>
            <person name="Bowns C."/>
            <person name="Boyle S."/>
            <person name="Crasta O.R."/>
            <person name="Czar M.J."/>
            <person name="Dharmanolla C."/>
            <person name="Gillespie J.J."/>
            <person name="Kenyon R.W."/>
            <person name="Lu J."/>
            <person name="Mane S."/>
            <person name="Mohapatra S."/>
            <person name="Nagrani S."/>
            <person name="Purkayastha A."/>
            <person name="Rajasimha H.K."/>
            <person name="Shallom J.M."/>
            <person name="Shallom S."/>
            <person name="Shukla M."/>
            <person name="Snyder E.E."/>
            <person name="Sobral B.W."/>
            <person name="Wattam A.R."/>
            <person name="Will R."/>
            <person name="Williams K."/>
            <person name="Yoo H."/>
            <person name="Bruce D."/>
            <person name="Detter C."/>
            <person name="Munk C."/>
            <person name="Brettin T.S."/>
        </authorList>
    </citation>
    <scope>NUCLEOTIDE SEQUENCE [LARGE SCALE GENOMIC DNA]</scope>
    <source>
        <strain>ATCC 23365 / NCTC 10854 / RM-666</strain>
    </source>
</reference>
<dbReference type="EMBL" id="CP000872">
    <property type="protein sequence ID" value="ABX62754.1"/>
    <property type="molecule type" value="Genomic_DNA"/>
</dbReference>
<dbReference type="RefSeq" id="WP_004689213.1">
    <property type="nucleotide sequence ID" value="NC_010103.1"/>
</dbReference>
<dbReference type="SMR" id="A9M7K7"/>
<dbReference type="GeneID" id="97533137"/>
<dbReference type="KEGG" id="bcs:BCAN_A1748"/>
<dbReference type="HOGENOM" id="CLU_074944_1_1_5"/>
<dbReference type="PhylomeDB" id="A9M7K7"/>
<dbReference type="UniPathway" id="UPA00345"/>
<dbReference type="Proteomes" id="UP000001385">
    <property type="component" value="Chromosome I"/>
</dbReference>
<dbReference type="GO" id="GO:0005737">
    <property type="term" value="C:cytoplasm"/>
    <property type="evidence" value="ECO:0007669"/>
    <property type="project" value="UniProtKB-SubCell"/>
</dbReference>
<dbReference type="GO" id="GO:0003746">
    <property type="term" value="F:translation elongation factor activity"/>
    <property type="evidence" value="ECO:0007669"/>
    <property type="project" value="UniProtKB-UniRule"/>
</dbReference>
<dbReference type="GO" id="GO:0043043">
    <property type="term" value="P:peptide biosynthetic process"/>
    <property type="evidence" value="ECO:0007669"/>
    <property type="project" value="InterPro"/>
</dbReference>
<dbReference type="CDD" id="cd04470">
    <property type="entry name" value="S1_EF-P_repeat_1"/>
    <property type="match status" value="1"/>
</dbReference>
<dbReference type="CDD" id="cd05794">
    <property type="entry name" value="S1_EF-P_repeat_2"/>
    <property type="match status" value="1"/>
</dbReference>
<dbReference type="FunFam" id="2.30.30.30:FF:000003">
    <property type="entry name" value="Elongation factor P"/>
    <property type="match status" value="1"/>
</dbReference>
<dbReference type="FunFam" id="2.40.50.140:FF:000004">
    <property type="entry name" value="Elongation factor P"/>
    <property type="match status" value="1"/>
</dbReference>
<dbReference type="FunFam" id="2.40.50.140:FF:000009">
    <property type="entry name" value="Elongation factor P"/>
    <property type="match status" value="1"/>
</dbReference>
<dbReference type="Gene3D" id="2.30.30.30">
    <property type="match status" value="1"/>
</dbReference>
<dbReference type="Gene3D" id="2.40.50.140">
    <property type="entry name" value="Nucleic acid-binding proteins"/>
    <property type="match status" value="2"/>
</dbReference>
<dbReference type="HAMAP" id="MF_00141">
    <property type="entry name" value="EF_P"/>
    <property type="match status" value="1"/>
</dbReference>
<dbReference type="InterPro" id="IPR015365">
    <property type="entry name" value="Elong-fact-P_C"/>
</dbReference>
<dbReference type="InterPro" id="IPR012340">
    <property type="entry name" value="NA-bd_OB-fold"/>
</dbReference>
<dbReference type="InterPro" id="IPR014722">
    <property type="entry name" value="Rib_uL2_dom2"/>
</dbReference>
<dbReference type="InterPro" id="IPR020599">
    <property type="entry name" value="Transl_elong_fac_P/YeiP"/>
</dbReference>
<dbReference type="InterPro" id="IPR013185">
    <property type="entry name" value="Transl_elong_KOW-like"/>
</dbReference>
<dbReference type="InterPro" id="IPR001059">
    <property type="entry name" value="Transl_elong_P/YeiP_cen"/>
</dbReference>
<dbReference type="InterPro" id="IPR013852">
    <property type="entry name" value="Transl_elong_P/YeiP_CS"/>
</dbReference>
<dbReference type="InterPro" id="IPR011768">
    <property type="entry name" value="Transl_elongation_fac_P"/>
</dbReference>
<dbReference type="InterPro" id="IPR008991">
    <property type="entry name" value="Translation_prot_SH3-like_sf"/>
</dbReference>
<dbReference type="NCBIfam" id="TIGR00038">
    <property type="entry name" value="efp"/>
    <property type="match status" value="1"/>
</dbReference>
<dbReference type="NCBIfam" id="NF001810">
    <property type="entry name" value="PRK00529.1"/>
    <property type="match status" value="1"/>
</dbReference>
<dbReference type="PANTHER" id="PTHR30053">
    <property type="entry name" value="ELONGATION FACTOR P"/>
    <property type="match status" value="1"/>
</dbReference>
<dbReference type="PANTHER" id="PTHR30053:SF14">
    <property type="entry name" value="TRANSLATION ELONGATION FACTOR KOW-LIKE DOMAIN-CONTAINING PROTEIN"/>
    <property type="match status" value="1"/>
</dbReference>
<dbReference type="Pfam" id="PF01132">
    <property type="entry name" value="EFP"/>
    <property type="match status" value="1"/>
</dbReference>
<dbReference type="Pfam" id="PF08207">
    <property type="entry name" value="EFP_N"/>
    <property type="match status" value="1"/>
</dbReference>
<dbReference type="Pfam" id="PF09285">
    <property type="entry name" value="Elong-fact-P_C"/>
    <property type="match status" value="1"/>
</dbReference>
<dbReference type="PIRSF" id="PIRSF005901">
    <property type="entry name" value="EF-P"/>
    <property type="match status" value="1"/>
</dbReference>
<dbReference type="SMART" id="SM01185">
    <property type="entry name" value="EFP"/>
    <property type="match status" value="1"/>
</dbReference>
<dbReference type="SMART" id="SM00841">
    <property type="entry name" value="Elong-fact-P_C"/>
    <property type="match status" value="1"/>
</dbReference>
<dbReference type="SUPFAM" id="SSF50249">
    <property type="entry name" value="Nucleic acid-binding proteins"/>
    <property type="match status" value="2"/>
</dbReference>
<dbReference type="SUPFAM" id="SSF50104">
    <property type="entry name" value="Translation proteins SH3-like domain"/>
    <property type="match status" value="1"/>
</dbReference>
<dbReference type="PROSITE" id="PS01275">
    <property type="entry name" value="EFP"/>
    <property type="match status" value="1"/>
</dbReference>
<proteinExistence type="inferred from homology"/>
<accession>A9M7K7</accession>
<comment type="function">
    <text evidence="1">Involved in peptide bond synthesis. Stimulates efficient translation and peptide-bond synthesis on native or reconstituted 70S ribosomes in vitro. Probably functions indirectly by altering the affinity of the ribosome for aminoacyl-tRNA, thus increasing their reactivity as acceptors for peptidyl transferase.</text>
</comment>
<comment type="pathway">
    <text evidence="1">Protein biosynthesis; polypeptide chain elongation.</text>
</comment>
<comment type="subcellular location">
    <subcellularLocation>
        <location evidence="1">Cytoplasm</location>
    </subcellularLocation>
</comment>
<comment type="similarity">
    <text evidence="1">Belongs to the elongation factor P family.</text>
</comment>